<name>FENR1_OCEIH</name>
<comment type="catalytic activity">
    <reaction evidence="1">
        <text>2 reduced [2Fe-2S]-[ferredoxin] + NADP(+) + H(+) = 2 oxidized [2Fe-2S]-[ferredoxin] + NADPH</text>
        <dbReference type="Rhea" id="RHEA:20125"/>
        <dbReference type="Rhea" id="RHEA-COMP:10000"/>
        <dbReference type="Rhea" id="RHEA-COMP:10001"/>
        <dbReference type="ChEBI" id="CHEBI:15378"/>
        <dbReference type="ChEBI" id="CHEBI:33737"/>
        <dbReference type="ChEBI" id="CHEBI:33738"/>
        <dbReference type="ChEBI" id="CHEBI:57783"/>
        <dbReference type="ChEBI" id="CHEBI:58349"/>
        <dbReference type="EC" id="1.18.1.2"/>
    </reaction>
</comment>
<comment type="cofactor">
    <cofactor evidence="1">
        <name>FAD</name>
        <dbReference type="ChEBI" id="CHEBI:57692"/>
    </cofactor>
    <text evidence="1">Binds 1 FAD per subunit.</text>
</comment>
<comment type="subunit">
    <text evidence="1">Homodimer.</text>
</comment>
<comment type="similarity">
    <text evidence="1">Belongs to the ferredoxin--NADP reductase type 2 family.</text>
</comment>
<evidence type="ECO:0000255" key="1">
    <source>
        <dbReference type="HAMAP-Rule" id="MF_01685"/>
    </source>
</evidence>
<protein>
    <recommendedName>
        <fullName evidence="1">Ferredoxin--NADP reductase 1</fullName>
        <shortName evidence="1">FNR 1</shortName>
        <shortName evidence="1">Fd-NADP(+) reductase 1</shortName>
        <ecNumber evidence="1">1.18.1.2</ecNumber>
    </recommendedName>
</protein>
<accession>Q8ETS1</accession>
<feature type="chain" id="PRO_0000364888" description="Ferredoxin--NADP reductase 1">
    <location>
        <begin position="1"/>
        <end position="348"/>
    </location>
</feature>
<feature type="binding site" evidence="1">
    <location>
        <position position="33"/>
    </location>
    <ligand>
        <name>FAD</name>
        <dbReference type="ChEBI" id="CHEBI:57692"/>
    </ligand>
</feature>
<feature type="binding site" evidence="1">
    <location>
        <position position="41"/>
    </location>
    <ligand>
        <name>FAD</name>
        <dbReference type="ChEBI" id="CHEBI:57692"/>
    </ligand>
</feature>
<feature type="binding site" evidence="1">
    <location>
        <position position="45"/>
    </location>
    <ligand>
        <name>FAD</name>
        <dbReference type="ChEBI" id="CHEBI:57692"/>
    </ligand>
</feature>
<feature type="binding site" evidence="1">
    <location>
        <position position="85"/>
    </location>
    <ligand>
        <name>FAD</name>
        <dbReference type="ChEBI" id="CHEBI:57692"/>
    </ligand>
</feature>
<feature type="binding site" evidence="1">
    <location>
        <position position="120"/>
    </location>
    <ligand>
        <name>FAD</name>
        <dbReference type="ChEBI" id="CHEBI:57692"/>
    </ligand>
</feature>
<feature type="binding site" evidence="1">
    <location>
        <position position="287"/>
    </location>
    <ligand>
        <name>FAD</name>
        <dbReference type="ChEBI" id="CHEBI:57692"/>
    </ligand>
</feature>
<feature type="binding site" evidence="1">
    <location>
        <position position="328"/>
    </location>
    <ligand>
        <name>FAD</name>
        <dbReference type="ChEBI" id="CHEBI:57692"/>
    </ligand>
</feature>
<keyword id="KW-0274">FAD</keyword>
<keyword id="KW-0285">Flavoprotein</keyword>
<keyword id="KW-0521">NADP</keyword>
<keyword id="KW-0560">Oxidoreductase</keyword>
<keyword id="KW-1185">Reference proteome</keyword>
<proteinExistence type="inferred from homology"/>
<dbReference type="EC" id="1.18.1.2" evidence="1"/>
<dbReference type="EMBL" id="BA000028">
    <property type="protein sequence ID" value="BAC12142.1"/>
    <property type="molecule type" value="Genomic_DNA"/>
</dbReference>
<dbReference type="RefSeq" id="WP_011064587.1">
    <property type="nucleotide sequence ID" value="NC_004193.1"/>
</dbReference>
<dbReference type="SMR" id="Q8ETS1"/>
<dbReference type="STRING" id="221109.gene:10732376"/>
<dbReference type="KEGG" id="oih:OB0186"/>
<dbReference type="eggNOG" id="COG0492">
    <property type="taxonomic scope" value="Bacteria"/>
</dbReference>
<dbReference type="HOGENOM" id="CLU_031864_5_5_9"/>
<dbReference type="OrthoDB" id="9806179at2"/>
<dbReference type="PhylomeDB" id="Q8ETS1"/>
<dbReference type="Proteomes" id="UP000000822">
    <property type="component" value="Chromosome"/>
</dbReference>
<dbReference type="GO" id="GO:0004324">
    <property type="term" value="F:ferredoxin-NADP+ reductase activity"/>
    <property type="evidence" value="ECO:0007669"/>
    <property type="project" value="UniProtKB-UniRule"/>
</dbReference>
<dbReference type="GO" id="GO:0050660">
    <property type="term" value="F:flavin adenine dinucleotide binding"/>
    <property type="evidence" value="ECO:0007669"/>
    <property type="project" value="UniProtKB-UniRule"/>
</dbReference>
<dbReference type="GO" id="GO:0050661">
    <property type="term" value="F:NADP binding"/>
    <property type="evidence" value="ECO:0007669"/>
    <property type="project" value="UniProtKB-UniRule"/>
</dbReference>
<dbReference type="Gene3D" id="3.50.50.60">
    <property type="entry name" value="FAD/NAD(P)-binding domain"/>
    <property type="match status" value="2"/>
</dbReference>
<dbReference type="HAMAP" id="MF_01685">
    <property type="entry name" value="FENR2"/>
    <property type="match status" value="1"/>
</dbReference>
<dbReference type="InterPro" id="IPR036188">
    <property type="entry name" value="FAD/NAD-bd_sf"/>
</dbReference>
<dbReference type="InterPro" id="IPR023753">
    <property type="entry name" value="FAD/NAD-binding_dom"/>
</dbReference>
<dbReference type="InterPro" id="IPR022890">
    <property type="entry name" value="Fd--NADP_Rdtase_type_2"/>
</dbReference>
<dbReference type="InterPro" id="IPR050097">
    <property type="entry name" value="Ferredoxin-NADP_redctase_2"/>
</dbReference>
<dbReference type="PANTHER" id="PTHR48105">
    <property type="entry name" value="THIOREDOXIN REDUCTASE 1-RELATED-RELATED"/>
    <property type="match status" value="1"/>
</dbReference>
<dbReference type="Pfam" id="PF07992">
    <property type="entry name" value="Pyr_redox_2"/>
    <property type="match status" value="1"/>
</dbReference>
<dbReference type="PRINTS" id="PR00368">
    <property type="entry name" value="FADPNR"/>
</dbReference>
<dbReference type="PRINTS" id="PR00469">
    <property type="entry name" value="PNDRDTASEII"/>
</dbReference>
<dbReference type="SUPFAM" id="SSF51905">
    <property type="entry name" value="FAD/NAD(P)-binding domain"/>
    <property type="match status" value="1"/>
</dbReference>
<gene>
    <name type="ordered locus">OB0186</name>
</gene>
<organism>
    <name type="scientific">Oceanobacillus iheyensis (strain DSM 14371 / CIP 107618 / JCM 11309 / KCTC 3954 / HTE831)</name>
    <dbReference type="NCBI Taxonomy" id="221109"/>
    <lineage>
        <taxon>Bacteria</taxon>
        <taxon>Bacillati</taxon>
        <taxon>Bacillota</taxon>
        <taxon>Bacilli</taxon>
        <taxon>Bacillales</taxon>
        <taxon>Bacillaceae</taxon>
        <taxon>Oceanobacillus</taxon>
    </lineage>
</organism>
<sequence length="348" mass="38141">MEVFDVTIVGGGPAGLYSAFYSGLREMKTKIIDYQAELGGKVHIYPEKVIWDIGGLTPMSGENVIKQMVEQAMTFDPTVVLNEKVESIDKNEMGLFQLHTASGEIHYSKTIIVAVGGGILHPKRLNLEGAEKYEVTNLNYKITSLQRYKDKRVIISGGGNSAVDWANELVDIAKSVYLTYRKDVLSGHEAQVTKLMKSSAECYFNCSITKLISENNQSIEHVELTNHESGDILALPIDEVIINHGYDRDIDLLDNSPSLGVEIKDGYFVAGSPNSESSVPGIYAAGDILHHEGKLHLIAGAFQDAANAVNQAKKYIDPMANNFAMVSSHNEMFKERNEKLKASAAASV</sequence>
<reference key="1">
    <citation type="journal article" date="2002" name="Nucleic Acids Res.">
        <title>Genome sequence of Oceanobacillus iheyensis isolated from the Iheya Ridge and its unexpected adaptive capabilities to extreme environments.</title>
        <authorList>
            <person name="Takami H."/>
            <person name="Takaki Y."/>
            <person name="Uchiyama I."/>
        </authorList>
    </citation>
    <scope>NUCLEOTIDE SEQUENCE [LARGE SCALE GENOMIC DNA]</scope>
    <source>
        <strain>DSM 14371 / CIP 107618 / JCM 11309 / KCTC 3954 / HTE831</strain>
    </source>
</reference>